<organism>
    <name type="scientific">Bacillus subtilis (strain 168)</name>
    <dbReference type="NCBI Taxonomy" id="224308"/>
    <lineage>
        <taxon>Bacteria</taxon>
        <taxon>Bacillati</taxon>
        <taxon>Bacillota</taxon>
        <taxon>Bacilli</taxon>
        <taxon>Bacillales</taxon>
        <taxon>Bacillaceae</taxon>
        <taxon>Bacillus</taxon>
    </lineage>
</organism>
<gene>
    <name type="primary">fosB</name>
    <name type="synonym">yndN</name>
    <name type="ordered locus">BSU17840</name>
</gene>
<feature type="chain" id="PRO_0000164032" description="Metallothiol transferase FosB">
    <location>
        <begin position="1"/>
        <end position="144"/>
    </location>
</feature>
<feature type="domain" description="VOC" evidence="2">
    <location>
        <begin position="5"/>
        <end position="120"/>
    </location>
</feature>
<feature type="active site" description="Proton donor/acceptor" evidence="2">
    <location>
        <position position="116"/>
    </location>
</feature>
<feature type="binding site" evidence="1">
    <location>
        <position position="8"/>
    </location>
    <ligand>
        <name>Mg(2+)</name>
        <dbReference type="ChEBI" id="CHEBI:18420"/>
    </ligand>
</feature>
<feature type="binding site" evidence="1">
    <location>
        <position position="67"/>
    </location>
    <ligand>
        <name>Mg(2+)</name>
        <dbReference type="ChEBI" id="CHEBI:18420"/>
    </ligand>
</feature>
<feature type="binding site" evidence="1">
    <location>
        <position position="116"/>
    </location>
    <ligand>
        <name>Mg(2+)</name>
        <dbReference type="ChEBI" id="CHEBI:18420"/>
    </ligand>
</feature>
<dbReference type="EC" id="2.5.1.-"/>
<dbReference type="EMBL" id="AL009126">
    <property type="protein sequence ID" value="CAB13668.1"/>
    <property type="molecule type" value="Genomic_DNA"/>
</dbReference>
<dbReference type="PIR" id="E69890">
    <property type="entry name" value="E69890"/>
</dbReference>
<dbReference type="RefSeq" id="NP_389667.1">
    <property type="nucleotide sequence ID" value="NC_000964.3"/>
</dbReference>
<dbReference type="SMR" id="O31817"/>
<dbReference type="FunCoup" id="O31817">
    <property type="interactions" value="16"/>
</dbReference>
<dbReference type="STRING" id="224308.BSU17840"/>
<dbReference type="PaxDb" id="224308-BSU17840"/>
<dbReference type="DNASU" id="938817"/>
<dbReference type="EnsemblBacteria" id="CAB13668">
    <property type="protein sequence ID" value="CAB13668"/>
    <property type="gene ID" value="BSU_17840"/>
</dbReference>
<dbReference type="GeneID" id="938817"/>
<dbReference type="KEGG" id="bsu:BSU17840"/>
<dbReference type="PATRIC" id="fig|224308.179.peg.1944"/>
<dbReference type="eggNOG" id="COG0346">
    <property type="taxonomic scope" value="Bacteria"/>
</dbReference>
<dbReference type="InParanoid" id="O31817"/>
<dbReference type="OrthoDB" id="192739at2"/>
<dbReference type="PhylomeDB" id="O31817"/>
<dbReference type="BioCyc" id="BSUB:BSU17840-MONOMER"/>
<dbReference type="Proteomes" id="UP000001570">
    <property type="component" value="Chromosome"/>
</dbReference>
<dbReference type="GO" id="GO:0005737">
    <property type="term" value="C:cytoplasm"/>
    <property type="evidence" value="ECO:0007669"/>
    <property type="project" value="UniProtKB-SubCell"/>
</dbReference>
<dbReference type="GO" id="GO:0000287">
    <property type="term" value="F:magnesium ion binding"/>
    <property type="evidence" value="ECO:0007669"/>
    <property type="project" value="UniProtKB-UniRule"/>
</dbReference>
<dbReference type="GO" id="GO:0016765">
    <property type="term" value="F:transferase activity, transferring alkyl or aryl (other than methyl) groups"/>
    <property type="evidence" value="ECO:0007669"/>
    <property type="project" value="UniProtKB-UniRule"/>
</dbReference>
<dbReference type="GO" id="GO:0046677">
    <property type="term" value="P:response to antibiotic"/>
    <property type="evidence" value="ECO:0007669"/>
    <property type="project" value="UniProtKB-UniRule"/>
</dbReference>
<dbReference type="Gene3D" id="3.10.180.10">
    <property type="entry name" value="2,3-Dihydroxybiphenyl 1,2-Dioxygenase, domain 1"/>
    <property type="match status" value="1"/>
</dbReference>
<dbReference type="HAMAP" id="MF_01512">
    <property type="entry name" value="FosB"/>
    <property type="match status" value="1"/>
</dbReference>
<dbReference type="InterPro" id="IPR051332">
    <property type="entry name" value="Fosfomycin_Res_Enzymes"/>
</dbReference>
<dbReference type="InterPro" id="IPR029068">
    <property type="entry name" value="Glyas_Bleomycin-R_OHBP_Dase"/>
</dbReference>
<dbReference type="InterPro" id="IPR004360">
    <property type="entry name" value="Glyas_Fos-R_dOase_dom"/>
</dbReference>
<dbReference type="InterPro" id="IPR022858">
    <property type="entry name" value="Metallothiol_Trafse_FosB"/>
</dbReference>
<dbReference type="InterPro" id="IPR037523">
    <property type="entry name" value="VOC"/>
</dbReference>
<dbReference type="NCBIfam" id="NF038306">
    <property type="entry name" value="fosM_gen"/>
    <property type="match status" value="1"/>
</dbReference>
<dbReference type="NCBIfam" id="NF003152">
    <property type="entry name" value="PRK04101.1"/>
    <property type="match status" value="1"/>
</dbReference>
<dbReference type="PANTHER" id="PTHR36113:SF6">
    <property type="entry name" value="FOSFOMYCIN RESISTANCE PROTEIN FOSX"/>
    <property type="match status" value="1"/>
</dbReference>
<dbReference type="PANTHER" id="PTHR36113">
    <property type="entry name" value="LYASE, PUTATIVE-RELATED-RELATED"/>
    <property type="match status" value="1"/>
</dbReference>
<dbReference type="Pfam" id="PF00903">
    <property type="entry name" value="Glyoxalase"/>
    <property type="match status" value="1"/>
</dbReference>
<dbReference type="SUPFAM" id="SSF54593">
    <property type="entry name" value="Glyoxalase/Bleomycin resistance protein/Dihydroxybiphenyl dioxygenase"/>
    <property type="match status" value="1"/>
</dbReference>
<dbReference type="PROSITE" id="PS51819">
    <property type="entry name" value="VOC"/>
    <property type="match status" value="1"/>
</dbReference>
<reference key="1">
    <citation type="journal article" date="1997" name="Nature">
        <title>The complete genome sequence of the Gram-positive bacterium Bacillus subtilis.</title>
        <authorList>
            <person name="Kunst F."/>
            <person name="Ogasawara N."/>
            <person name="Moszer I."/>
            <person name="Albertini A.M."/>
            <person name="Alloni G."/>
            <person name="Azevedo V."/>
            <person name="Bertero M.G."/>
            <person name="Bessieres P."/>
            <person name="Bolotin A."/>
            <person name="Borchert S."/>
            <person name="Borriss R."/>
            <person name="Boursier L."/>
            <person name="Brans A."/>
            <person name="Braun M."/>
            <person name="Brignell S.C."/>
            <person name="Bron S."/>
            <person name="Brouillet S."/>
            <person name="Bruschi C.V."/>
            <person name="Caldwell B."/>
            <person name="Capuano V."/>
            <person name="Carter N.M."/>
            <person name="Choi S.-K."/>
            <person name="Codani J.-J."/>
            <person name="Connerton I.F."/>
            <person name="Cummings N.J."/>
            <person name="Daniel R.A."/>
            <person name="Denizot F."/>
            <person name="Devine K.M."/>
            <person name="Duesterhoeft A."/>
            <person name="Ehrlich S.D."/>
            <person name="Emmerson P.T."/>
            <person name="Entian K.-D."/>
            <person name="Errington J."/>
            <person name="Fabret C."/>
            <person name="Ferrari E."/>
            <person name="Foulger D."/>
            <person name="Fritz C."/>
            <person name="Fujita M."/>
            <person name="Fujita Y."/>
            <person name="Fuma S."/>
            <person name="Galizzi A."/>
            <person name="Galleron N."/>
            <person name="Ghim S.-Y."/>
            <person name="Glaser P."/>
            <person name="Goffeau A."/>
            <person name="Golightly E.J."/>
            <person name="Grandi G."/>
            <person name="Guiseppi G."/>
            <person name="Guy B.J."/>
            <person name="Haga K."/>
            <person name="Haiech J."/>
            <person name="Harwood C.R."/>
            <person name="Henaut A."/>
            <person name="Hilbert H."/>
            <person name="Holsappel S."/>
            <person name="Hosono S."/>
            <person name="Hullo M.-F."/>
            <person name="Itaya M."/>
            <person name="Jones L.-M."/>
            <person name="Joris B."/>
            <person name="Karamata D."/>
            <person name="Kasahara Y."/>
            <person name="Klaerr-Blanchard M."/>
            <person name="Klein C."/>
            <person name="Kobayashi Y."/>
            <person name="Koetter P."/>
            <person name="Koningstein G."/>
            <person name="Krogh S."/>
            <person name="Kumano M."/>
            <person name="Kurita K."/>
            <person name="Lapidus A."/>
            <person name="Lardinois S."/>
            <person name="Lauber J."/>
            <person name="Lazarevic V."/>
            <person name="Lee S.-M."/>
            <person name="Levine A."/>
            <person name="Liu H."/>
            <person name="Masuda S."/>
            <person name="Mauel C."/>
            <person name="Medigue C."/>
            <person name="Medina N."/>
            <person name="Mellado R.P."/>
            <person name="Mizuno M."/>
            <person name="Moestl D."/>
            <person name="Nakai S."/>
            <person name="Noback M."/>
            <person name="Noone D."/>
            <person name="O'Reilly M."/>
            <person name="Ogawa K."/>
            <person name="Ogiwara A."/>
            <person name="Oudega B."/>
            <person name="Park S.-H."/>
            <person name="Parro V."/>
            <person name="Pohl T.M."/>
            <person name="Portetelle D."/>
            <person name="Porwollik S."/>
            <person name="Prescott A.M."/>
            <person name="Presecan E."/>
            <person name="Pujic P."/>
            <person name="Purnelle B."/>
            <person name="Rapoport G."/>
            <person name="Rey M."/>
            <person name="Reynolds S."/>
            <person name="Rieger M."/>
            <person name="Rivolta C."/>
            <person name="Rocha E."/>
            <person name="Roche B."/>
            <person name="Rose M."/>
            <person name="Sadaie Y."/>
            <person name="Sato T."/>
            <person name="Scanlan E."/>
            <person name="Schleich S."/>
            <person name="Schroeter R."/>
            <person name="Scoffone F."/>
            <person name="Sekiguchi J."/>
            <person name="Sekowska A."/>
            <person name="Seror S.J."/>
            <person name="Serror P."/>
            <person name="Shin B.-S."/>
            <person name="Soldo B."/>
            <person name="Sorokin A."/>
            <person name="Tacconi E."/>
            <person name="Takagi T."/>
            <person name="Takahashi H."/>
            <person name="Takemaru K."/>
            <person name="Takeuchi M."/>
            <person name="Tamakoshi A."/>
            <person name="Tanaka T."/>
            <person name="Terpstra P."/>
            <person name="Tognoni A."/>
            <person name="Tosato V."/>
            <person name="Uchiyama S."/>
            <person name="Vandenbol M."/>
            <person name="Vannier F."/>
            <person name="Vassarotti A."/>
            <person name="Viari A."/>
            <person name="Wambutt R."/>
            <person name="Wedler E."/>
            <person name="Wedler H."/>
            <person name="Weitzenegger T."/>
            <person name="Winters P."/>
            <person name="Wipat A."/>
            <person name="Yamamoto H."/>
            <person name="Yamane K."/>
            <person name="Yasumoto K."/>
            <person name="Yata K."/>
            <person name="Yoshida K."/>
            <person name="Yoshikawa H.-F."/>
            <person name="Zumstein E."/>
            <person name="Yoshikawa H."/>
            <person name="Danchin A."/>
        </authorList>
    </citation>
    <scope>NUCLEOTIDE SEQUENCE [LARGE SCALE GENOMIC DNA]</scope>
    <source>
        <strain>168</strain>
    </source>
</reference>
<reference key="2">
    <citation type="journal article" date="2001" name="J. Bacteriol.">
        <title>FosB, a cysteine-dependent fosfomycin resistance protein under the control of sigma(W), an extracytoplasmic-function sigma factor in Bacillus subtilis.</title>
        <authorList>
            <person name="Cao M."/>
            <person name="Bernat B.A."/>
            <person name="Wang Z."/>
            <person name="Armstrong R.N."/>
            <person name="Helmann J.D."/>
        </authorList>
    </citation>
    <scope>CHARACTERIZATION</scope>
    <source>
        <strain>168</strain>
    </source>
</reference>
<comment type="function">
    <text>Metallothiol transferase which confers resistance to fosfomycin by catalyzing the addition of a thiol cofactor to fosfomycin. L-cysteine is probably the physiological thiol donor.</text>
</comment>
<comment type="cofactor">
    <cofactor>
        <name>Mg(2+)</name>
        <dbReference type="ChEBI" id="CHEBI:18420"/>
    </cofactor>
</comment>
<comment type="subunit">
    <text>Homodimer.</text>
</comment>
<comment type="subcellular location">
    <subcellularLocation>
        <location evidence="1">Cytoplasm</location>
    </subcellularLocation>
</comment>
<comment type="induction">
    <text>Expression is sigma W-dependent.</text>
</comment>
<comment type="similarity">
    <text evidence="3">Belongs to the fosfomycin resistance protein family. FosB subfamily.</text>
</comment>
<sequence length="144" mass="17172">MEIKGINHLLFSVSHLDTSIDFYQKVFGAKLLVKGRTTAYFDMNGIWLALNEEPDIPRNDIKLSYTHIAFTIEDHEFEEMSAKLKRLHVNILPGRERDERDRKSIYFTDPDGHKFEFHTGTLQDRLRYYKQEKTHMHFYDETAF</sequence>
<protein>
    <recommendedName>
        <fullName>Metallothiol transferase FosB</fullName>
        <ecNumber>2.5.1.-</ecNumber>
    </recommendedName>
    <alternativeName>
        <fullName>Fosfomycin resistance protein</fullName>
    </alternativeName>
</protein>
<keyword id="KW-0046">Antibiotic resistance</keyword>
<keyword id="KW-0963">Cytoplasm</keyword>
<keyword id="KW-0460">Magnesium</keyword>
<keyword id="KW-0479">Metal-binding</keyword>
<keyword id="KW-1185">Reference proteome</keyword>
<keyword id="KW-0808">Transferase</keyword>
<proteinExistence type="evidence at protein level"/>
<name>FOSB_BACSU</name>
<accession>O31817</accession>
<evidence type="ECO:0000250" key="1"/>
<evidence type="ECO:0000255" key="2">
    <source>
        <dbReference type="PROSITE-ProRule" id="PRU01163"/>
    </source>
</evidence>
<evidence type="ECO:0000305" key="3"/>